<keyword id="KW-0067">ATP-binding</keyword>
<keyword id="KW-0418">Kinase</keyword>
<keyword id="KW-0545">Nucleotide biosynthesis</keyword>
<keyword id="KW-0547">Nucleotide-binding</keyword>
<keyword id="KW-0808">Transferase</keyword>
<comment type="function">
    <text evidence="1">Phosphorylation of dTMP to form dTDP in both de novo and salvage pathways of dTTP synthesis.</text>
</comment>
<comment type="catalytic activity">
    <reaction evidence="1">
        <text>dTMP + ATP = dTDP + ADP</text>
        <dbReference type="Rhea" id="RHEA:13517"/>
        <dbReference type="ChEBI" id="CHEBI:30616"/>
        <dbReference type="ChEBI" id="CHEBI:58369"/>
        <dbReference type="ChEBI" id="CHEBI:63528"/>
        <dbReference type="ChEBI" id="CHEBI:456216"/>
        <dbReference type="EC" id="2.7.4.9"/>
    </reaction>
</comment>
<comment type="similarity">
    <text evidence="1">Belongs to the thymidylate kinase family.</text>
</comment>
<sequence length="210" mass="23843">MKGKFIVIEGLEGAGKSSAHQSVVRVLHELAIQDVVFTREPGGTPLAEKLRHLIKHETEEPVTHKAELLMLYAARIQLVDNVIKPALMQGKWVVGDRHDMSSQAYQGGGRQLDPHFMLTLKETVLGDFEPDLTIYLDIDPIVGLARARGRGELDRIEQMDLDFFHRTRARYLELVKDNPKAVMINAEQSIELVQADIERAVKNWWKSNEK</sequence>
<dbReference type="EC" id="2.7.4.9" evidence="1"/>
<dbReference type="EMBL" id="CP000671">
    <property type="protein sequence ID" value="ABQ97634.1"/>
    <property type="molecule type" value="Genomic_DNA"/>
</dbReference>
<dbReference type="SMR" id="A5UA33"/>
<dbReference type="KEGG" id="hip:CGSHiEE_00710"/>
<dbReference type="HOGENOM" id="CLU_049131_0_1_6"/>
<dbReference type="GO" id="GO:0005829">
    <property type="term" value="C:cytosol"/>
    <property type="evidence" value="ECO:0007669"/>
    <property type="project" value="TreeGrafter"/>
</dbReference>
<dbReference type="GO" id="GO:0005524">
    <property type="term" value="F:ATP binding"/>
    <property type="evidence" value="ECO:0007669"/>
    <property type="project" value="UniProtKB-UniRule"/>
</dbReference>
<dbReference type="GO" id="GO:0004798">
    <property type="term" value="F:dTMP kinase activity"/>
    <property type="evidence" value="ECO:0007669"/>
    <property type="project" value="UniProtKB-UniRule"/>
</dbReference>
<dbReference type="GO" id="GO:0006233">
    <property type="term" value="P:dTDP biosynthetic process"/>
    <property type="evidence" value="ECO:0007669"/>
    <property type="project" value="InterPro"/>
</dbReference>
<dbReference type="GO" id="GO:0006235">
    <property type="term" value="P:dTTP biosynthetic process"/>
    <property type="evidence" value="ECO:0007669"/>
    <property type="project" value="UniProtKB-UniRule"/>
</dbReference>
<dbReference type="GO" id="GO:0006227">
    <property type="term" value="P:dUDP biosynthetic process"/>
    <property type="evidence" value="ECO:0007669"/>
    <property type="project" value="TreeGrafter"/>
</dbReference>
<dbReference type="CDD" id="cd01672">
    <property type="entry name" value="TMPK"/>
    <property type="match status" value="1"/>
</dbReference>
<dbReference type="FunFam" id="3.40.50.300:FF:000321">
    <property type="entry name" value="Thymidylate kinase"/>
    <property type="match status" value="1"/>
</dbReference>
<dbReference type="Gene3D" id="3.40.50.300">
    <property type="entry name" value="P-loop containing nucleotide triphosphate hydrolases"/>
    <property type="match status" value="1"/>
</dbReference>
<dbReference type="HAMAP" id="MF_00165">
    <property type="entry name" value="Thymidylate_kinase"/>
    <property type="match status" value="1"/>
</dbReference>
<dbReference type="InterPro" id="IPR027417">
    <property type="entry name" value="P-loop_NTPase"/>
</dbReference>
<dbReference type="InterPro" id="IPR039430">
    <property type="entry name" value="Thymidylate_kin-like_dom"/>
</dbReference>
<dbReference type="InterPro" id="IPR018095">
    <property type="entry name" value="Thymidylate_kin_CS"/>
</dbReference>
<dbReference type="InterPro" id="IPR018094">
    <property type="entry name" value="Thymidylate_kinase"/>
</dbReference>
<dbReference type="NCBIfam" id="TIGR00041">
    <property type="entry name" value="DTMP_kinase"/>
    <property type="match status" value="1"/>
</dbReference>
<dbReference type="PANTHER" id="PTHR10344">
    <property type="entry name" value="THYMIDYLATE KINASE"/>
    <property type="match status" value="1"/>
</dbReference>
<dbReference type="PANTHER" id="PTHR10344:SF4">
    <property type="entry name" value="UMP-CMP KINASE 2, MITOCHONDRIAL"/>
    <property type="match status" value="1"/>
</dbReference>
<dbReference type="Pfam" id="PF02223">
    <property type="entry name" value="Thymidylate_kin"/>
    <property type="match status" value="1"/>
</dbReference>
<dbReference type="SUPFAM" id="SSF52540">
    <property type="entry name" value="P-loop containing nucleoside triphosphate hydrolases"/>
    <property type="match status" value="1"/>
</dbReference>
<dbReference type="PROSITE" id="PS01331">
    <property type="entry name" value="THYMIDYLATE_KINASE"/>
    <property type="match status" value="1"/>
</dbReference>
<name>KTHY_HAEIE</name>
<proteinExistence type="inferred from homology"/>
<protein>
    <recommendedName>
        <fullName evidence="1">Thymidylate kinase</fullName>
        <ecNumber evidence="1">2.7.4.9</ecNumber>
    </recommendedName>
    <alternativeName>
        <fullName evidence="1">dTMP kinase</fullName>
    </alternativeName>
</protein>
<organism>
    <name type="scientific">Haemophilus influenzae (strain PittEE)</name>
    <dbReference type="NCBI Taxonomy" id="374930"/>
    <lineage>
        <taxon>Bacteria</taxon>
        <taxon>Pseudomonadati</taxon>
        <taxon>Pseudomonadota</taxon>
        <taxon>Gammaproteobacteria</taxon>
        <taxon>Pasteurellales</taxon>
        <taxon>Pasteurellaceae</taxon>
        <taxon>Haemophilus</taxon>
    </lineage>
</organism>
<accession>A5UA33</accession>
<reference key="1">
    <citation type="journal article" date="2007" name="Genome Biol.">
        <title>Characterization and modeling of the Haemophilus influenzae core and supragenomes based on the complete genomic sequences of Rd and 12 clinical nontypeable strains.</title>
        <authorList>
            <person name="Hogg J.S."/>
            <person name="Hu F.Z."/>
            <person name="Janto B."/>
            <person name="Boissy R."/>
            <person name="Hayes J."/>
            <person name="Keefe R."/>
            <person name="Post J.C."/>
            <person name="Ehrlich G.D."/>
        </authorList>
    </citation>
    <scope>NUCLEOTIDE SEQUENCE [LARGE SCALE GENOMIC DNA]</scope>
    <source>
        <strain>PittEE</strain>
    </source>
</reference>
<gene>
    <name evidence="1" type="primary">tmk</name>
    <name type="ordered locus">CGSHiEE_00710</name>
</gene>
<evidence type="ECO:0000255" key="1">
    <source>
        <dbReference type="HAMAP-Rule" id="MF_00165"/>
    </source>
</evidence>
<feature type="chain" id="PRO_1000123576" description="Thymidylate kinase">
    <location>
        <begin position="1"/>
        <end position="210"/>
    </location>
</feature>
<feature type="binding site" evidence="1">
    <location>
        <begin position="10"/>
        <end position="17"/>
    </location>
    <ligand>
        <name>ATP</name>
        <dbReference type="ChEBI" id="CHEBI:30616"/>
    </ligand>
</feature>